<protein>
    <recommendedName>
        <fullName evidence="1">UvrABC system protein A</fullName>
        <shortName evidence="1">UvrA protein</shortName>
    </recommendedName>
    <alternativeName>
        <fullName evidence="1">Excinuclease ABC subunit A</fullName>
    </alternativeName>
</protein>
<evidence type="ECO:0000255" key="1">
    <source>
        <dbReference type="HAMAP-Rule" id="MF_00205"/>
    </source>
</evidence>
<sequence length="940" mass="104328">MDKIEVRGARTHNLKNINLTIPRDKLIVITGLSGSGKSSLAFDTLYAEGQRRYVESLSAYARQFLSLMEKPDVDHIEGLSPAISIEQKSTSHNPRSTVGTITEVYDYLRLLYARVGEPRCPEHQVPLKAQTISQMVDKVLELPEGSKMMLLATIVKERKGEHVKTLENLAAQGFIRARIDGETCDLTDPPKLELHKKHTIEVIVDRFKVRSDLQQRLAESFETALELSGGIVVVAPMEGDGEEQIFSANFACPHCGYSMRELEPRLFSFNNPAGACPTCDGLGVQQYFDPDRVIQDANLSLAQGAIRGWDQKNFYYFQMLTALAEHYDFDVHTPFNKLSKKIQEIILHGSGRTEIEFKYINDRGDIRLKKHPFEGILHNLERRYRDTESNSVREELAKYISNKPCSSCDGTRLKIEARNVFINDTALPTIVELSIADALTFFQELKLEGQRAQIAEKVMKEINDRLQFLVNVGLNYLNLSRSAETLSGGEAQRIRLASQIGAGLVGVMYVLDEPSIGLHQRDNERLLQTLTHLRNLGNTVLVVEHDEDAIRMADHVIDIGPGAGVHGGMVVAEGNVEEIIANPNSLTGQYLSGVKKIAVPEQRTPKDAKKTVELKGAVGNNLKNVDLSIPVGLFTCVTGVSGSGKSTLINDTFFKIAHTALNGATTATPAPYRSIQGLEHFDKVIDIDQSPIGRTPRSNPATYTGIFTPIRELFAGTQESRSRGYQPGRFSFNVRGGRCEACQGDGVIKVEMHFLPDVYVPCDVCKGKRYNRETLEVRYKGKTIDEVLDMTVEDAREFFDPVPVIARKLQTLMDVGLSYIRLGQSATTLSGGEAQRVKLARELSKRDTGKTLYILDEPTTGLHFHDIQQLLSVLHRLRDHGNTVVVIEHNLDVIKTADWIIDLGPEGGQGGGLIIAEGTPEDVAQIEASHTARFLKPLLN</sequence>
<comment type="function">
    <text evidence="1">The UvrABC repair system catalyzes the recognition and processing of DNA lesions. UvrA is an ATPase and a DNA-binding protein. A damage recognition complex composed of 2 UvrA and 2 UvrB subunits scans DNA for abnormalities. When the presence of a lesion has been verified by UvrB, the UvrA molecules dissociate.</text>
</comment>
<comment type="subunit">
    <text evidence="1">Forms a heterotetramer with UvrB during the search for lesions.</text>
</comment>
<comment type="subcellular location">
    <subcellularLocation>
        <location evidence="1">Cytoplasm</location>
    </subcellularLocation>
</comment>
<comment type="similarity">
    <text evidence="1">Belongs to the ABC transporter superfamily. UvrA family.</text>
</comment>
<feature type="chain" id="PRO_0000093111" description="UvrABC system protein A">
    <location>
        <begin position="1"/>
        <end position="940"/>
    </location>
</feature>
<feature type="domain" description="ABC transporter 1" evidence="1">
    <location>
        <begin position="309"/>
        <end position="586"/>
    </location>
</feature>
<feature type="domain" description="ABC transporter 2" evidence="1">
    <location>
        <begin position="606"/>
        <end position="936"/>
    </location>
</feature>
<feature type="zinc finger region" description="C4-type" evidence="1">
    <location>
        <begin position="252"/>
        <end position="279"/>
    </location>
</feature>
<feature type="zinc finger region" description="C4-type" evidence="1">
    <location>
        <begin position="739"/>
        <end position="765"/>
    </location>
</feature>
<feature type="binding site" evidence="1">
    <location>
        <begin position="31"/>
        <end position="38"/>
    </location>
    <ligand>
        <name>ATP</name>
        <dbReference type="ChEBI" id="CHEBI:30616"/>
    </ligand>
</feature>
<feature type="binding site" evidence="1">
    <location>
        <begin position="639"/>
        <end position="646"/>
    </location>
    <ligand>
        <name>ATP</name>
        <dbReference type="ChEBI" id="CHEBI:30616"/>
    </ligand>
</feature>
<proteinExistence type="inferred from homology"/>
<keyword id="KW-0067">ATP-binding</keyword>
<keyword id="KW-0963">Cytoplasm</keyword>
<keyword id="KW-0227">DNA damage</keyword>
<keyword id="KW-0228">DNA excision</keyword>
<keyword id="KW-0234">DNA repair</keyword>
<keyword id="KW-0238">DNA-binding</keyword>
<keyword id="KW-0267">Excision nuclease</keyword>
<keyword id="KW-0479">Metal-binding</keyword>
<keyword id="KW-0547">Nucleotide-binding</keyword>
<keyword id="KW-1185">Reference proteome</keyword>
<keyword id="KW-0677">Repeat</keyword>
<keyword id="KW-0742">SOS response</keyword>
<keyword id="KW-0862">Zinc</keyword>
<keyword id="KW-0863">Zinc-finger</keyword>
<dbReference type="EMBL" id="AE003852">
    <property type="protein sequence ID" value="AAF93567.1"/>
    <property type="molecule type" value="Genomic_DNA"/>
</dbReference>
<dbReference type="PIR" id="A82329">
    <property type="entry name" value="A82329"/>
</dbReference>
<dbReference type="RefSeq" id="NP_230048.1">
    <property type="nucleotide sequence ID" value="NC_002505.1"/>
</dbReference>
<dbReference type="RefSeq" id="WP_000357696.1">
    <property type="nucleotide sequence ID" value="NZ_LT906614.1"/>
</dbReference>
<dbReference type="SMR" id="Q9KUW5"/>
<dbReference type="STRING" id="243277.VC_0394"/>
<dbReference type="DNASU" id="2614991"/>
<dbReference type="EnsemblBacteria" id="AAF93567">
    <property type="protein sequence ID" value="AAF93567"/>
    <property type="gene ID" value="VC_0394"/>
</dbReference>
<dbReference type="KEGG" id="vch:VC_0394"/>
<dbReference type="PATRIC" id="fig|243277.26.peg.369"/>
<dbReference type="eggNOG" id="COG0178">
    <property type="taxonomic scope" value="Bacteria"/>
</dbReference>
<dbReference type="HOGENOM" id="CLU_001370_0_2_6"/>
<dbReference type="Proteomes" id="UP000000584">
    <property type="component" value="Chromosome 1"/>
</dbReference>
<dbReference type="GO" id="GO:0005737">
    <property type="term" value="C:cytoplasm"/>
    <property type="evidence" value="ECO:0007669"/>
    <property type="project" value="UniProtKB-SubCell"/>
</dbReference>
<dbReference type="GO" id="GO:0009380">
    <property type="term" value="C:excinuclease repair complex"/>
    <property type="evidence" value="ECO:0007669"/>
    <property type="project" value="InterPro"/>
</dbReference>
<dbReference type="GO" id="GO:0005524">
    <property type="term" value="F:ATP binding"/>
    <property type="evidence" value="ECO:0007669"/>
    <property type="project" value="UniProtKB-UniRule"/>
</dbReference>
<dbReference type="GO" id="GO:0016887">
    <property type="term" value="F:ATP hydrolysis activity"/>
    <property type="evidence" value="ECO:0007669"/>
    <property type="project" value="InterPro"/>
</dbReference>
<dbReference type="GO" id="GO:0003677">
    <property type="term" value="F:DNA binding"/>
    <property type="evidence" value="ECO:0007669"/>
    <property type="project" value="UniProtKB-UniRule"/>
</dbReference>
<dbReference type="GO" id="GO:0009381">
    <property type="term" value="F:excinuclease ABC activity"/>
    <property type="evidence" value="ECO:0007669"/>
    <property type="project" value="UniProtKB-UniRule"/>
</dbReference>
<dbReference type="GO" id="GO:0008270">
    <property type="term" value="F:zinc ion binding"/>
    <property type="evidence" value="ECO:0007669"/>
    <property type="project" value="UniProtKB-UniRule"/>
</dbReference>
<dbReference type="GO" id="GO:0006289">
    <property type="term" value="P:nucleotide-excision repair"/>
    <property type="evidence" value="ECO:0007669"/>
    <property type="project" value="UniProtKB-UniRule"/>
</dbReference>
<dbReference type="GO" id="GO:0009432">
    <property type="term" value="P:SOS response"/>
    <property type="evidence" value="ECO:0007669"/>
    <property type="project" value="UniProtKB-UniRule"/>
</dbReference>
<dbReference type="CDD" id="cd03270">
    <property type="entry name" value="ABC_UvrA_I"/>
    <property type="match status" value="1"/>
</dbReference>
<dbReference type="CDD" id="cd03271">
    <property type="entry name" value="ABC_UvrA_II"/>
    <property type="match status" value="1"/>
</dbReference>
<dbReference type="FunFam" id="1.10.8.280:FF:000001">
    <property type="entry name" value="UvrABC system protein A"/>
    <property type="match status" value="1"/>
</dbReference>
<dbReference type="FunFam" id="1.20.1580.10:FF:000002">
    <property type="entry name" value="UvrABC system protein A"/>
    <property type="match status" value="1"/>
</dbReference>
<dbReference type="FunFam" id="1.20.1580.10:FF:000003">
    <property type="entry name" value="UvrABC system protein A"/>
    <property type="match status" value="1"/>
</dbReference>
<dbReference type="FunFam" id="3.30.190.20:FF:000003">
    <property type="entry name" value="UvrABC system protein A"/>
    <property type="match status" value="1"/>
</dbReference>
<dbReference type="Gene3D" id="1.10.8.280">
    <property type="entry name" value="ABC transporter ATPase domain-like"/>
    <property type="match status" value="1"/>
</dbReference>
<dbReference type="Gene3D" id="1.20.1580.10">
    <property type="entry name" value="ABC transporter ATPase like domain"/>
    <property type="match status" value="2"/>
</dbReference>
<dbReference type="Gene3D" id="3.30.1490.20">
    <property type="entry name" value="ATP-grasp fold, A domain"/>
    <property type="match status" value="1"/>
</dbReference>
<dbReference type="Gene3D" id="3.40.50.300">
    <property type="entry name" value="P-loop containing nucleotide triphosphate hydrolases"/>
    <property type="match status" value="2"/>
</dbReference>
<dbReference type="HAMAP" id="MF_00205">
    <property type="entry name" value="UvrA"/>
    <property type="match status" value="1"/>
</dbReference>
<dbReference type="InterPro" id="IPR003439">
    <property type="entry name" value="ABC_transporter-like_ATP-bd"/>
</dbReference>
<dbReference type="InterPro" id="IPR017871">
    <property type="entry name" value="ABC_transporter-like_CS"/>
</dbReference>
<dbReference type="InterPro" id="IPR013815">
    <property type="entry name" value="ATP_grasp_subdomain_1"/>
</dbReference>
<dbReference type="InterPro" id="IPR027417">
    <property type="entry name" value="P-loop_NTPase"/>
</dbReference>
<dbReference type="InterPro" id="IPR004602">
    <property type="entry name" value="UvrA"/>
</dbReference>
<dbReference type="InterPro" id="IPR041552">
    <property type="entry name" value="UvrA_DNA-bd"/>
</dbReference>
<dbReference type="InterPro" id="IPR041102">
    <property type="entry name" value="UvrA_inter"/>
</dbReference>
<dbReference type="NCBIfam" id="NF001503">
    <property type="entry name" value="PRK00349.1"/>
    <property type="match status" value="1"/>
</dbReference>
<dbReference type="NCBIfam" id="TIGR00630">
    <property type="entry name" value="uvra"/>
    <property type="match status" value="1"/>
</dbReference>
<dbReference type="PANTHER" id="PTHR43152">
    <property type="entry name" value="UVRABC SYSTEM PROTEIN A"/>
    <property type="match status" value="1"/>
</dbReference>
<dbReference type="PANTHER" id="PTHR43152:SF3">
    <property type="entry name" value="UVRABC SYSTEM PROTEIN A"/>
    <property type="match status" value="1"/>
</dbReference>
<dbReference type="Pfam" id="PF00005">
    <property type="entry name" value="ABC_tran"/>
    <property type="match status" value="1"/>
</dbReference>
<dbReference type="Pfam" id="PF17755">
    <property type="entry name" value="UvrA_DNA-bind"/>
    <property type="match status" value="1"/>
</dbReference>
<dbReference type="Pfam" id="PF17760">
    <property type="entry name" value="UvrA_inter"/>
    <property type="match status" value="1"/>
</dbReference>
<dbReference type="SUPFAM" id="SSF52540">
    <property type="entry name" value="P-loop containing nucleoside triphosphate hydrolases"/>
    <property type="match status" value="2"/>
</dbReference>
<dbReference type="PROSITE" id="PS00211">
    <property type="entry name" value="ABC_TRANSPORTER_1"/>
    <property type="match status" value="2"/>
</dbReference>
<dbReference type="PROSITE" id="PS50893">
    <property type="entry name" value="ABC_TRANSPORTER_2"/>
    <property type="match status" value="2"/>
</dbReference>
<organism>
    <name type="scientific">Vibrio cholerae serotype O1 (strain ATCC 39315 / El Tor Inaba N16961)</name>
    <dbReference type="NCBI Taxonomy" id="243277"/>
    <lineage>
        <taxon>Bacteria</taxon>
        <taxon>Pseudomonadati</taxon>
        <taxon>Pseudomonadota</taxon>
        <taxon>Gammaproteobacteria</taxon>
        <taxon>Vibrionales</taxon>
        <taxon>Vibrionaceae</taxon>
        <taxon>Vibrio</taxon>
    </lineage>
</organism>
<reference key="1">
    <citation type="journal article" date="2000" name="Nature">
        <title>DNA sequence of both chromosomes of the cholera pathogen Vibrio cholerae.</title>
        <authorList>
            <person name="Heidelberg J.F."/>
            <person name="Eisen J.A."/>
            <person name="Nelson W.C."/>
            <person name="Clayton R.A."/>
            <person name="Gwinn M.L."/>
            <person name="Dodson R.J."/>
            <person name="Haft D.H."/>
            <person name="Hickey E.K."/>
            <person name="Peterson J.D."/>
            <person name="Umayam L.A."/>
            <person name="Gill S.R."/>
            <person name="Nelson K.E."/>
            <person name="Read T.D."/>
            <person name="Tettelin H."/>
            <person name="Richardson D.L."/>
            <person name="Ermolaeva M.D."/>
            <person name="Vamathevan J.J."/>
            <person name="Bass S."/>
            <person name="Qin H."/>
            <person name="Dragoi I."/>
            <person name="Sellers P."/>
            <person name="McDonald L.A."/>
            <person name="Utterback T.R."/>
            <person name="Fleischmann R.D."/>
            <person name="Nierman W.C."/>
            <person name="White O."/>
            <person name="Salzberg S.L."/>
            <person name="Smith H.O."/>
            <person name="Colwell R.R."/>
            <person name="Mekalanos J.J."/>
            <person name="Venter J.C."/>
            <person name="Fraser C.M."/>
        </authorList>
    </citation>
    <scope>NUCLEOTIDE SEQUENCE [LARGE SCALE GENOMIC DNA]</scope>
    <source>
        <strain>ATCC 39315 / El Tor Inaba N16961</strain>
    </source>
</reference>
<gene>
    <name evidence="1" type="primary">uvrA</name>
    <name type="ordered locus">VC_0394</name>
</gene>
<accession>Q9KUW5</accession>
<name>UVRA_VIBCH</name>